<protein>
    <recommendedName>
        <fullName>Perlin matrix protein</fullName>
    </recommendedName>
</protein>
<dbReference type="EMBL" id="DQ665305">
    <property type="protein sequence ID" value="ABG24165.3"/>
    <property type="molecule type" value="mRNA"/>
</dbReference>
<dbReference type="SMR" id="Q14WA6"/>
<dbReference type="GO" id="GO:0005576">
    <property type="term" value="C:extracellular region"/>
    <property type="evidence" value="ECO:0007669"/>
    <property type="project" value="UniProtKB-KW"/>
</dbReference>
<keyword id="KW-1015">Disulfide bond</keyword>
<keyword id="KW-0272">Extracellular matrix</keyword>
<keyword id="KW-0964">Secreted</keyword>
<keyword id="KW-0732">Signal</keyword>
<accession>Q14WA6</accession>
<evidence type="ECO:0000250" key="1"/>
<evidence type="ECO:0000305" key="2"/>
<organism>
    <name type="scientific">Margaritifera margaritifera</name>
    <name type="common">Freshwater pearl mussel</name>
    <dbReference type="NCBI Taxonomy" id="102329"/>
    <lineage>
        <taxon>Eukaryota</taxon>
        <taxon>Metazoa</taxon>
        <taxon>Spiralia</taxon>
        <taxon>Lophotrochozoa</taxon>
        <taxon>Mollusca</taxon>
        <taxon>Bivalvia</taxon>
        <taxon>Autobranchia</taxon>
        <taxon>Pteriomorphia</taxon>
        <taxon>Pterioida</taxon>
        <taxon>Pterioidea</taxon>
        <taxon>Pteriidae</taxon>
        <taxon>Pinctada</taxon>
    </lineage>
</organism>
<sequence>MTCTLRLTVAALVLLGICHLSRPVAAYQKCARYWYCWLPYDIERDRYDDGYRLCCYCRNAWTPWQCREDEQFERLRCGSRYYTLCCYTEDDNGNGNGNGNGYGNGNGNGNGNNYLKYLFGGNGNGNGEFWEEYIDERYDK</sequence>
<comment type="function">
    <text evidence="1">May be specifically involved in the formation of the nacreous layer.</text>
</comment>
<comment type="subunit">
    <text evidence="1">Heterooligomer; disulfide-linked. Pif97, Pif80, N16 and other proteins form a complex (By similarity).</text>
</comment>
<comment type="subcellular location">
    <subcellularLocation>
        <location evidence="1">Secreted</location>
        <location evidence="1">Extracellular space</location>
        <location evidence="1">Extracellular matrix</location>
    </subcellularLocation>
</comment>
<comment type="tissue specificity">
    <text>Component of conchiolin, the organic matrix of nacre. Only expressed in the dorsal region of the mantle.</text>
</comment>
<comment type="similarity">
    <text evidence="2">Belongs to the N16 matrix protein family.</text>
</comment>
<feature type="signal peptide" evidence="1">
    <location>
        <begin position="1"/>
        <end position="26"/>
    </location>
</feature>
<feature type="chain" id="PRO_0000379786" description="Perlin matrix protein">
    <location>
        <begin position="27"/>
        <end position="140"/>
    </location>
</feature>
<proteinExistence type="evidence at transcript level"/>
<name>MAPE_PINMG</name>
<reference key="1">
    <citation type="submission" date="2009-09" db="EMBL/GenBank/DDBJ databases">
        <title>Characterization of perline and calcine, two conserved shell matrix genes implicated in biomineralization processes in the pearl oyster Pinctada margaritifera.</title>
        <authorList>
            <person name="Montagnani C."/>
            <person name="Fleury E."/>
            <person name="Belliard C."/>
            <person name="Piquemal D."/>
            <person name="Flaven E."/>
            <person name="Cochennec-Laureau N."/>
        </authorList>
    </citation>
    <scope>NUCLEOTIDE SEQUENCE [MRNA]</scope>
</reference>